<organism>
    <name type="scientific">Danio rerio</name>
    <name type="common">Zebrafish</name>
    <name type="synonym">Brachydanio rerio</name>
    <dbReference type="NCBI Taxonomy" id="7955"/>
    <lineage>
        <taxon>Eukaryota</taxon>
        <taxon>Metazoa</taxon>
        <taxon>Chordata</taxon>
        <taxon>Craniata</taxon>
        <taxon>Vertebrata</taxon>
        <taxon>Euteleostomi</taxon>
        <taxon>Actinopterygii</taxon>
        <taxon>Neopterygii</taxon>
        <taxon>Teleostei</taxon>
        <taxon>Ostariophysi</taxon>
        <taxon>Cypriniformes</taxon>
        <taxon>Danionidae</taxon>
        <taxon>Danioninae</taxon>
        <taxon>Danio</taxon>
    </lineage>
</organism>
<sequence>MLPVCVDADQALRCSVLWRPWSLSPTEARGHKTLAGGVRSARPSGGVFHHPVRLFLPRSRMQEYLSRLGSSVLASFPVQATLHFYNDEDSSSEEEEDEEHANTRCRLWRP</sequence>
<accession>Q2WG78</accession>
<accession>Q05AP9</accession>
<keyword id="KW-0217">Developmental protein</keyword>
<keyword id="KW-0539">Nucleus</keyword>
<keyword id="KW-1185">Reference proteome</keyword>
<keyword id="KW-0804">Transcription</keyword>
<keyword id="KW-0805">Transcription regulation</keyword>
<protein>
    <recommendedName>
        <fullName>Protein ripply3</fullName>
    </recommendedName>
    <alternativeName>
        <fullName>Down syndrome critical region protein 6 homolog</fullName>
    </alternativeName>
</protein>
<feature type="chain" id="PRO_0000307764" description="Protein ripply3">
    <location>
        <begin position="1"/>
        <end position="110"/>
    </location>
</feature>
<feature type="region of interest" description="Ripply homology domain" evidence="3">
    <location>
        <begin position="50"/>
        <end position="85"/>
    </location>
</feature>
<feature type="region of interest" description="Disordered" evidence="4">
    <location>
        <begin position="87"/>
        <end position="110"/>
    </location>
</feature>
<feature type="short sequence motif" description="WRPW motif" evidence="3">
    <location>
        <begin position="18"/>
        <end position="21"/>
    </location>
</feature>
<feature type="compositionally biased region" description="Acidic residues" evidence="4">
    <location>
        <begin position="87"/>
        <end position="99"/>
    </location>
</feature>
<feature type="sequence conflict" description="In Ref. 2; AAI24089." evidence="5" ref="2">
    <original>P</original>
    <variation>A</variation>
    <location>
        <position position="25"/>
    </location>
</feature>
<name>DSCR6_DANRE</name>
<proteinExistence type="inferred from homology"/>
<dbReference type="EMBL" id="AB212221">
    <property type="protein sequence ID" value="BAE53718.1"/>
    <property type="molecule type" value="mRNA"/>
</dbReference>
<dbReference type="EMBL" id="BC124088">
    <property type="protein sequence ID" value="AAI24089.1"/>
    <property type="molecule type" value="mRNA"/>
</dbReference>
<dbReference type="RefSeq" id="NP_001034199.3">
    <property type="nucleotide sequence ID" value="NM_001039110.3"/>
</dbReference>
<dbReference type="STRING" id="7955.ENSDARP00000053701"/>
<dbReference type="PaxDb" id="7955-ENSDARP00000053701"/>
<dbReference type="Ensembl" id="ENSDART00000053702">
    <property type="protein sequence ID" value="ENSDARP00000053701"/>
    <property type="gene ID" value="ENSDARG00000036974"/>
</dbReference>
<dbReference type="GeneID" id="654448"/>
<dbReference type="KEGG" id="dre:654448"/>
<dbReference type="AGR" id="ZFIN:ZDB-GENE-060113-3"/>
<dbReference type="CTD" id="53820"/>
<dbReference type="ZFIN" id="ZDB-GENE-060113-3">
    <property type="gene designation" value="ripply3"/>
</dbReference>
<dbReference type="eggNOG" id="ENOG502S482">
    <property type="taxonomic scope" value="Eukaryota"/>
</dbReference>
<dbReference type="HOGENOM" id="CLU_117697_1_0_1"/>
<dbReference type="InParanoid" id="Q2WG78"/>
<dbReference type="OMA" id="WMMTARD"/>
<dbReference type="OrthoDB" id="9905973at2759"/>
<dbReference type="PhylomeDB" id="Q2WG78"/>
<dbReference type="PRO" id="PR:Q2WG78"/>
<dbReference type="Proteomes" id="UP000000437">
    <property type="component" value="Chromosome 10"/>
</dbReference>
<dbReference type="Bgee" id="ENSDARG00000036974">
    <property type="expression patterns" value="Expressed in early embryo and 9 other cell types or tissues"/>
</dbReference>
<dbReference type="GO" id="GO:0005634">
    <property type="term" value="C:nucleus"/>
    <property type="evidence" value="ECO:0000250"/>
    <property type="project" value="UniProtKB"/>
</dbReference>
<dbReference type="GO" id="GO:0003714">
    <property type="term" value="F:transcription corepressor activity"/>
    <property type="evidence" value="ECO:0000266"/>
    <property type="project" value="ZFIN"/>
</dbReference>
<dbReference type="GO" id="GO:0009880">
    <property type="term" value="P:embryonic pattern specification"/>
    <property type="evidence" value="ECO:0000318"/>
    <property type="project" value="GO_Central"/>
</dbReference>
<dbReference type="GO" id="GO:0000122">
    <property type="term" value="P:negative regulation of transcription by RNA polymerase II"/>
    <property type="evidence" value="ECO:0000318"/>
    <property type="project" value="GO_Central"/>
</dbReference>
<dbReference type="GO" id="GO:0003139">
    <property type="term" value="P:secondary heart field specification"/>
    <property type="evidence" value="ECO:0000315"/>
    <property type="project" value="ZFIN"/>
</dbReference>
<dbReference type="InterPro" id="IPR028127">
    <property type="entry name" value="Ripply_fam"/>
</dbReference>
<dbReference type="PANTHER" id="PTHR16770">
    <property type="entry name" value="PROTEIN RIPPLY-LIKE"/>
    <property type="match status" value="1"/>
</dbReference>
<dbReference type="PANTHER" id="PTHR16770:SF4">
    <property type="entry name" value="PROTEIN RIPPLY3"/>
    <property type="match status" value="1"/>
</dbReference>
<dbReference type="Pfam" id="PF14998">
    <property type="entry name" value="Ripply"/>
    <property type="match status" value="1"/>
</dbReference>
<evidence type="ECO:0000250" key="1"/>
<evidence type="ECO:0000250" key="2">
    <source>
        <dbReference type="UniProtKB" id="Q2WG80"/>
    </source>
</evidence>
<evidence type="ECO:0000255" key="3"/>
<evidence type="ECO:0000256" key="4">
    <source>
        <dbReference type="SAM" id="MobiDB-lite"/>
    </source>
</evidence>
<evidence type="ECO:0000305" key="5"/>
<evidence type="ECO:0000312" key="6">
    <source>
        <dbReference type="EMBL" id="AAI24089.1"/>
    </source>
</evidence>
<evidence type="ECO:0000312" key="7">
    <source>
        <dbReference type="EMBL" id="BAE53718.1"/>
    </source>
</evidence>
<comment type="function">
    <text evidence="1">Probable transcriptional regulator involved in developmental processes.</text>
</comment>
<comment type="subcellular location">
    <subcellularLocation>
        <location evidence="2">Nucleus</location>
    </subcellularLocation>
</comment>
<comment type="domain">
    <text evidence="1">The Ripply homology domain and the WRPW motif are both necessary for its transcriptional corepressor activity on the transcription activator TBX1.</text>
</comment>
<comment type="domain">
    <text evidence="2">The WRPW motif is required for binding to tle/groucho proteins.</text>
</comment>
<comment type="similarity">
    <text evidence="5">Belongs to the ripply family.</text>
</comment>
<reference evidence="7" key="1">
    <citation type="journal article" date="2005" name="Dev. Cell">
        <title>Groucho-associated transcriptional repressor ripply1 is required for proper transition from the presomitic mesoderm to somites.</title>
        <authorList>
            <person name="Kawamura A."/>
            <person name="Koshida S."/>
            <person name="Hijikata H."/>
            <person name="Ohbayashi A."/>
            <person name="Kondoh H."/>
            <person name="Takada S."/>
        </authorList>
    </citation>
    <scope>NUCLEOTIDE SEQUENCE [MRNA]</scope>
</reference>
<reference evidence="6" key="2">
    <citation type="submission" date="2006-09" db="EMBL/GenBank/DDBJ databases">
        <authorList>
            <consortium name="NIH - Zebrafish Gene Collection (ZGC) project"/>
        </authorList>
    </citation>
    <scope>NUCLEOTIDE SEQUENCE [LARGE SCALE MRNA]</scope>
    <source>
        <tissue evidence="6">Olfactory epithelium</tissue>
    </source>
</reference>
<gene>
    <name type="primary">ripply3</name>
    <name type="synonym">dscr6</name>
</gene>